<accession>Q30ZT5</accession>
<feature type="chain" id="PRO_1000012731" description="ATP-dependent protease ATPase subunit HslU">
    <location>
        <begin position="1"/>
        <end position="449"/>
    </location>
</feature>
<feature type="binding site" evidence="1">
    <location>
        <position position="18"/>
    </location>
    <ligand>
        <name>ATP</name>
        <dbReference type="ChEBI" id="CHEBI:30616"/>
    </ligand>
</feature>
<feature type="binding site" evidence="1">
    <location>
        <begin position="60"/>
        <end position="65"/>
    </location>
    <ligand>
        <name>ATP</name>
        <dbReference type="ChEBI" id="CHEBI:30616"/>
    </ligand>
</feature>
<feature type="binding site" evidence="1">
    <location>
        <position position="261"/>
    </location>
    <ligand>
        <name>ATP</name>
        <dbReference type="ChEBI" id="CHEBI:30616"/>
    </ligand>
</feature>
<feature type="binding site" evidence="1">
    <location>
        <position position="327"/>
    </location>
    <ligand>
        <name>ATP</name>
        <dbReference type="ChEBI" id="CHEBI:30616"/>
    </ligand>
</feature>
<feature type="binding site" evidence="1">
    <location>
        <position position="399"/>
    </location>
    <ligand>
        <name>ATP</name>
        <dbReference type="ChEBI" id="CHEBI:30616"/>
    </ligand>
</feature>
<proteinExistence type="inferred from homology"/>
<comment type="function">
    <text evidence="1">ATPase subunit of a proteasome-like degradation complex; this subunit has chaperone activity. The binding of ATP and its subsequent hydrolysis by HslU are essential for unfolding of protein substrates subsequently hydrolyzed by HslV. HslU recognizes the N-terminal part of its protein substrates and unfolds these before they are guided to HslV for hydrolysis.</text>
</comment>
<comment type="subunit">
    <text evidence="1">A double ring-shaped homohexamer of HslV is capped on each side by a ring-shaped HslU homohexamer. The assembly of the HslU/HslV complex is dependent on binding of ATP.</text>
</comment>
<comment type="subcellular location">
    <subcellularLocation>
        <location evidence="1">Cytoplasm</location>
    </subcellularLocation>
</comment>
<comment type="similarity">
    <text evidence="1">Belongs to the ClpX chaperone family. HslU subfamily.</text>
</comment>
<evidence type="ECO:0000255" key="1">
    <source>
        <dbReference type="HAMAP-Rule" id="MF_00249"/>
    </source>
</evidence>
<reference key="1">
    <citation type="journal article" date="2011" name="J. Bacteriol.">
        <title>Complete genome sequence and updated annotation of Desulfovibrio alaskensis G20.</title>
        <authorList>
            <person name="Hauser L.J."/>
            <person name="Land M.L."/>
            <person name="Brown S.D."/>
            <person name="Larimer F."/>
            <person name="Keller K.L."/>
            <person name="Rapp-Giles B.J."/>
            <person name="Price M.N."/>
            <person name="Lin M."/>
            <person name="Bruce D.C."/>
            <person name="Detter J.C."/>
            <person name="Tapia R."/>
            <person name="Han C.S."/>
            <person name="Goodwin L.A."/>
            <person name="Cheng J.F."/>
            <person name="Pitluck S."/>
            <person name="Copeland A."/>
            <person name="Lucas S."/>
            <person name="Nolan M."/>
            <person name="Lapidus A.L."/>
            <person name="Palumbo A.V."/>
            <person name="Wall J.D."/>
        </authorList>
    </citation>
    <scope>NUCLEOTIDE SEQUENCE [LARGE SCALE GENOMIC DNA]</scope>
    <source>
        <strain>ATCC BAA-1058 / DSM 17464 / G20</strain>
    </source>
</reference>
<gene>
    <name evidence="1" type="primary">hslU</name>
    <name type="ordered locus">Dde_2014</name>
</gene>
<organism>
    <name type="scientific">Oleidesulfovibrio alaskensis (strain ATCC BAA-1058 / DSM 17464 / G20)</name>
    <name type="common">Desulfovibrio alaskensis</name>
    <dbReference type="NCBI Taxonomy" id="207559"/>
    <lineage>
        <taxon>Bacteria</taxon>
        <taxon>Pseudomonadati</taxon>
        <taxon>Thermodesulfobacteriota</taxon>
        <taxon>Desulfovibrionia</taxon>
        <taxon>Desulfovibrionales</taxon>
        <taxon>Desulfovibrionaceae</taxon>
        <taxon>Oleidesulfovibrio</taxon>
    </lineage>
</organism>
<sequence>MSVLTPREIVSELDKYIIGQEQAKRMVAVALRNRWRRQQLEPAIRDEVAPKNIIMMGPTGVGKTEIARRLARLSSSPFLKVEATKFTEVGYVGRDVESMIRDLMEISVNLVREEERDSVKTRAEAAAEERLLDLLLPSSPAVNTSFDTPQTPAGGAENTRNKLRTLWREGRLDHREVEMEVEMQSGPQMDVMTMPGMEDIGSQFKDMFSKAFPPKRKRRRMKVGDAYAILLQEESERLIDHEKVIELARERAEQTGIIFLDEIDKIASSQQGGKTADISREGVQRDLLPIVEGSAVNTKYGIIHTDHILFIGAGAFHYSKPSDLIPELQGRFPLRVELTALGSKEFLRILTEPKNALTVQYKALLATEGVQIEYTEDALEAVADFAQEANQETENIGARRLYTIMEKILADLSFEAPDKSGERIVIDREYVRQHLADITANRDLTRYIL</sequence>
<protein>
    <recommendedName>
        <fullName evidence="1">ATP-dependent protease ATPase subunit HslU</fullName>
    </recommendedName>
    <alternativeName>
        <fullName evidence="1">Unfoldase HslU</fullName>
    </alternativeName>
</protein>
<keyword id="KW-0067">ATP-binding</keyword>
<keyword id="KW-0143">Chaperone</keyword>
<keyword id="KW-0963">Cytoplasm</keyword>
<keyword id="KW-0547">Nucleotide-binding</keyword>
<keyword id="KW-1185">Reference proteome</keyword>
<keyword id="KW-0346">Stress response</keyword>
<name>HSLU_OLEA2</name>
<dbReference type="EMBL" id="CP000112">
    <property type="protein sequence ID" value="ABB38811.1"/>
    <property type="molecule type" value="Genomic_DNA"/>
</dbReference>
<dbReference type="RefSeq" id="WP_011367919.1">
    <property type="nucleotide sequence ID" value="NC_007519.1"/>
</dbReference>
<dbReference type="SMR" id="Q30ZT5"/>
<dbReference type="STRING" id="207559.Dde_2014"/>
<dbReference type="KEGG" id="dde:Dde_2014"/>
<dbReference type="eggNOG" id="COG1220">
    <property type="taxonomic scope" value="Bacteria"/>
</dbReference>
<dbReference type="HOGENOM" id="CLU_033123_0_0_7"/>
<dbReference type="Proteomes" id="UP000002710">
    <property type="component" value="Chromosome"/>
</dbReference>
<dbReference type="GO" id="GO:0009376">
    <property type="term" value="C:HslUV protease complex"/>
    <property type="evidence" value="ECO:0007669"/>
    <property type="project" value="UniProtKB-UniRule"/>
</dbReference>
<dbReference type="GO" id="GO:0005524">
    <property type="term" value="F:ATP binding"/>
    <property type="evidence" value="ECO:0007669"/>
    <property type="project" value="UniProtKB-UniRule"/>
</dbReference>
<dbReference type="GO" id="GO:0016887">
    <property type="term" value="F:ATP hydrolysis activity"/>
    <property type="evidence" value="ECO:0007669"/>
    <property type="project" value="InterPro"/>
</dbReference>
<dbReference type="GO" id="GO:0008233">
    <property type="term" value="F:peptidase activity"/>
    <property type="evidence" value="ECO:0007669"/>
    <property type="project" value="InterPro"/>
</dbReference>
<dbReference type="GO" id="GO:0036402">
    <property type="term" value="F:proteasome-activating activity"/>
    <property type="evidence" value="ECO:0007669"/>
    <property type="project" value="UniProtKB-UniRule"/>
</dbReference>
<dbReference type="GO" id="GO:0043335">
    <property type="term" value="P:protein unfolding"/>
    <property type="evidence" value="ECO:0007669"/>
    <property type="project" value="UniProtKB-UniRule"/>
</dbReference>
<dbReference type="GO" id="GO:0051603">
    <property type="term" value="P:proteolysis involved in protein catabolic process"/>
    <property type="evidence" value="ECO:0007669"/>
    <property type="project" value="TreeGrafter"/>
</dbReference>
<dbReference type="CDD" id="cd19498">
    <property type="entry name" value="RecA-like_HslU"/>
    <property type="match status" value="1"/>
</dbReference>
<dbReference type="FunFam" id="3.40.50.300:FF:000220">
    <property type="entry name" value="ATP-dependent protease ATPase subunit HslU"/>
    <property type="match status" value="1"/>
</dbReference>
<dbReference type="Gene3D" id="1.10.8.60">
    <property type="match status" value="1"/>
</dbReference>
<dbReference type="Gene3D" id="3.40.50.300">
    <property type="entry name" value="P-loop containing nucleotide triphosphate hydrolases"/>
    <property type="match status" value="2"/>
</dbReference>
<dbReference type="HAMAP" id="MF_00249">
    <property type="entry name" value="HslU"/>
    <property type="match status" value="1"/>
</dbReference>
<dbReference type="InterPro" id="IPR003593">
    <property type="entry name" value="AAA+_ATPase"/>
</dbReference>
<dbReference type="InterPro" id="IPR050052">
    <property type="entry name" value="ATP-dep_Clp_protease_ClpX"/>
</dbReference>
<dbReference type="InterPro" id="IPR003959">
    <property type="entry name" value="ATPase_AAA_core"/>
</dbReference>
<dbReference type="InterPro" id="IPR019489">
    <property type="entry name" value="Clp_ATPase_C"/>
</dbReference>
<dbReference type="InterPro" id="IPR004491">
    <property type="entry name" value="HslU"/>
</dbReference>
<dbReference type="InterPro" id="IPR027417">
    <property type="entry name" value="P-loop_NTPase"/>
</dbReference>
<dbReference type="NCBIfam" id="TIGR00390">
    <property type="entry name" value="hslU"/>
    <property type="match status" value="1"/>
</dbReference>
<dbReference type="NCBIfam" id="NF003544">
    <property type="entry name" value="PRK05201.1"/>
    <property type="match status" value="1"/>
</dbReference>
<dbReference type="PANTHER" id="PTHR48102">
    <property type="entry name" value="ATP-DEPENDENT CLP PROTEASE ATP-BINDING SUBUNIT CLPX-LIKE, MITOCHONDRIAL-RELATED"/>
    <property type="match status" value="1"/>
</dbReference>
<dbReference type="PANTHER" id="PTHR48102:SF3">
    <property type="entry name" value="ATP-DEPENDENT PROTEASE ATPASE SUBUNIT HSLU"/>
    <property type="match status" value="1"/>
</dbReference>
<dbReference type="Pfam" id="PF00004">
    <property type="entry name" value="AAA"/>
    <property type="match status" value="1"/>
</dbReference>
<dbReference type="Pfam" id="PF07724">
    <property type="entry name" value="AAA_2"/>
    <property type="match status" value="1"/>
</dbReference>
<dbReference type="SMART" id="SM00382">
    <property type="entry name" value="AAA"/>
    <property type="match status" value="1"/>
</dbReference>
<dbReference type="SMART" id="SM01086">
    <property type="entry name" value="ClpB_D2-small"/>
    <property type="match status" value="1"/>
</dbReference>
<dbReference type="SUPFAM" id="SSF52540">
    <property type="entry name" value="P-loop containing nucleoside triphosphate hydrolases"/>
    <property type="match status" value="1"/>
</dbReference>